<sequence>MSTKVPIYLKRGSRKGKKEKLRDLLSSDMISPPLGDFRHTIHIGSGGGNDTFGDISFLQGKFHLLPGTAVDETQEDSGFEMPFQFTRTATLCGRELPDGPSPLLKNAISLPVIGGPQALTLPAAQAPPKPPRLHLETPQASPQEAGTVDVWRIPEAGAAHSELTTESGAEEPFLSHASSLLSLHVDLGPSILDDVLQIMDQDLGHLQIPT</sequence>
<feature type="initiator methionine" description="Removed" evidence="2">
    <location>
        <position position="1"/>
    </location>
</feature>
<feature type="chain" id="PRO_0000394513" description="Cdc42 effector protein 2">
    <location>
        <begin position="2"/>
        <end position="210"/>
    </location>
</feature>
<feature type="domain" description="CRIB" evidence="4">
    <location>
        <begin position="30"/>
        <end position="44"/>
    </location>
</feature>
<feature type="region of interest" description="Disordered" evidence="5">
    <location>
        <begin position="124"/>
        <end position="145"/>
    </location>
</feature>
<feature type="modified residue" description="N-acetylserine" evidence="2">
    <location>
        <position position="2"/>
    </location>
</feature>
<feature type="modified residue" description="Phosphoserine" evidence="2">
    <location>
        <position position="31"/>
    </location>
</feature>
<feature type="modified residue" description="Phosphoserine" evidence="3">
    <location>
        <position position="101"/>
    </location>
</feature>
<feature type="modified residue" description="Phosphoserine" evidence="2">
    <location>
        <position position="141"/>
    </location>
</feature>
<comment type="function">
    <text evidence="1">Probably involved in the organization of the actin cytoskeleton. May act downstream of CDC42 to induce actin filament assembly leading to cell shape changes. Induces pseudopodia formation in fibroblasts in a CDC42-dependent manner (By similarity).</text>
</comment>
<comment type="subunit">
    <text evidence="1">Interacts with CDC42 and RHOQ, in a GTP-dependent manner, and with SEPT7.</text>
</comment>
<comment type="subcellular location">
    <subcellularLocation>
        <location evidence="1">Endomembrane system</location>
        <topology evidence="1">Peripheral membrane protein</topology>
    </subcellularLocation>
    <subcellularLocation>
        <location evidence="1">Cytoplasm</location>
        <location evidence="1">Cytoskeleton</location>
    </subcellularLocation>
</comment>
<comment type="domain">
    <text evidence="1">The CRIB domain mediates interaction with CDC42.</text>
</comment>
<comment type="similarity">
    <text evidence="6">Belongs to the BORG/CEP family.</text>
</comment>
<organism>
    <name type="scientific">Bos taurus</name>
    <name type="common">Bovine</name>
    <dbReference type="NCBI Taxonomy" id="9913"/>
    <lineage>
        <taxon>Eukaryota</taxon>
        <taxon>Metazoa</taxon>
        <taxon>Chordata</taxon>
        <taxon>Craniata</taxon>
        <taxon>Vertebrata</taxon>
        <taxon>Euteleostomi</taxon>
        <taxon>Mammalia</taxon>
        <taxon>Eutheria</taxon>
        <taxon>Laurasiatheria</taxon>
        <taxon>Artiodactyla</taxon>
        <taxon>Ruminantia</taxon>
        <taxon>Pecora</taxon>
        <taxon>Bovidae</taxon>
        <taxon>Bovinae</taxon>
        <taxon>Bos</taxon>
    </lineage>
</organism>
<proteinExistence type="evidence at transcript level"/>
<reference key="1">
    <citation type="submission" date="2006-09" db="EMBL/GenBank/DDBJ databases">
        <authorList>
            <consortium name="NIH - Mammalian Gene Collection (MGC) project"/>
        </authorList>
    </citation>
    <scope>NUCLEOTIDE SEQUENCE [LARGE SCALE MRNA]</scope>
    <source>
        <strain>Hereford</strain>
        <tissue>Hippocampus</tissue>
    </source>
</reference>
<protein>
    <recommendedName>
        <fullName>Cdc42 effector protein 2</fullName>
    </recommendedName>
    <alternativeName>
        <fullName>Binder of Rho GTPases 1</fullName>
    </alternativeName>
</protein>
<keyword id="KW-0007">Acetylation</keyword>
<keyword id="KW-0133">Cell shape</keyword>
<keyword id="KW-0963">Cytoplasm</keyword>
<keyword id="KW-0206">Cytoskeleton</keyword>
<keyword id="KW-0472">Membrane</keyword>
<keyword id="KW-0597">Phosphoprotein</keyword>
<keyword id="KW-1185">Reference proteome</keyword>
<evidence type="ECO:0000250" key="1"/>
<evidence type="ECO:0000250" key="2">
    <source>
        <dbReference type="UniProtKB" id="O14613"/>
    </source>
</evidence>
<evidence type="ECO:0000250" key="3">
    <source>
        <dbReference type="UniProtKB" id="Q5PQP4"/>
    </source>
</evidence>
<evidence type="ECO:0000255" key="4">
    <source>
        <dbReference type="PROSITE-ProRule" id="PRU00057"/>
    </source>
</evidence>
<evidence type="ECO:0000256" key="5">
    <source>
        <dbReference type="SAM" id="MobiDB-lite"/>
    </source>
</evidence>
<evidence type="ECO:0000305" key="6"/>
<name>BORG1_BOVIN</name>
<gene>
    <name type="primary">CDC42EP2</name>
    <name type="synonym">BORG1</name>
    <name type="synonym">CEP2</name>
</gene>
<accession>Q08DN6</accession>
<dbReference type="EMBL" id="BC123647">
    <property type="protein sequence ID" value="AAI23648.1"/>
    <property type="molecule type" value="mRNA"/>
</dbReference>
<dbReference type="RefSeq" id="NP_001068809.1">
    <property type="nucleotide sequence ID" value="NM_001075341.1"/>
</dbReference>
<dbReference type="FunCoup" id="Q08DN6">
    <property type="interactions" value="116"/>
</dbReference>
<dbReference type="STRING" id="9913.ENSBTAP00000042899"/>
<dbReference type="PaxDb" id="9913-ENSBTAP00000042899"/>
<dbReference type="Ensembl" id="ENSBTAT00000045518.4">
    <property type="protein sequence ID" value="ENSBTAP00000042899.2"/>
    <property type="gene ID" value="ENSBTAG00000032089.4"/>
</dbReference>
<dbReference type="Ensembl" id="ENSBTAT00000100340.1">
    <property type="protein sequence ID" value="ENSBTAP00000095208.1"/>
    <property type="gene ID" value="ENSBTAG00000032089.4"/>
</dbReference>
<dbReference type="Ensembl" id="ENSBTAT00000100750.1">
    <property type="protein sequence ID" value="ENSBTAP00000080176.1"/>
    <property type="gene ID" value="ENSBTAG00000032089.4"/>
</dbReference>
<dbReference type="GeneID" id="507966"/>
<dbReference type="KEGG" id="bta:507966"/>
<dbReference type="CTD" id="10435"/>
<dbReference type="VEuPathDB" id="HostDB:ENSBTAG00000032089"/>
<dbReference type="VGNC" id="VGNC:27073">
    <property type="gene designation" value="CDC42EP2"/>
</dbReference>
<dbReference type="eggNOG" id="ENOG502RY28">
    <property type="taxonomic scope" value="Eukaryota"/>
</dbReference>
<dbReference type="GeneTree" id="ENSGT00940000161776"/>
<dbReference type="HOGENOM" id="CLU_073229_0_0_1"/>
<dbReference type="InParanoid" id="Q08DN6"/>
<dbReference type="OMA" id="DQDLGHM"/>
<dbReference type="OrthoDB" id="9948028at2759"/>
<dbReference type="TreeFam" id="TF331725"/>
<dbReference type="Reactome" id="R-BTA-5687128">
    <property type="pathway name" value="MAPK6/MAPK4 signaling"/>
</dbReference>
<dbReference type="Reactome" id="R-BTA-9013406">
    <property type="pathway name" value="RHOQ GTPase cycle"/>
</dbReference>
<dbReference type="Proteomes" id="UP000009136">
    <property type="component" value="Chromosome 29"/>
</dbReference>
<dbReference type="Bgee" id="ENSBTAG00000032089">
    <property type="expression patterns" value="Expressed in pons and 99 other cell types or tissues"/>
</dbReference>
<dbReference type="GO" id="GO:0005737">
    <property type="term" value="C:cytoplasm"/>
    <property type="evidence" value="ECO:0000318"/>
    <property type="project" value="GO_Central"/>
</dbReference>
<dbReference type="GO" id="GO:0005856">
    <property type="term" value="C:cytoskeleton"/>
    <property type="evidence" value="ECO:0000318"/>
    <property type="project" value="GO_Central"/>
</dbReference>
<dbReference type="GO" id="GO:0005829">
    <property type="term" value="C:cytosol"/>
    <property type="evidence" value="ECO:0007669"/>
    <property type="project" value="Ensembl"/>
</dbReference>
<dbReference type="GO" id="GO:0012505">
    <property type="term" value="C:endomembrane system"/>
    <property type="evidence" value="ECO:0007669"/>
    <property type="project" value="UniProtKB-SubCell"/>
</dbReference>
<dbReference type="GO" id="GO:0015630">
    <property type="term" value="C:microtubule cytoskeleton"/>
    <property type="evidence" value="ECO:0007669"/>
    <property type="project" value="Ensembl"/>
</dbReference>
<dbReference type="GO" id="GO:0045335">
    <property type="term" value="C:phagocytic vesicle"/>
    <property type="evidence" value="ECO:0007669"/>
    <property type="project" value="Ensembl"/>
</dbReference>
<dbReference type="GO" id="GO:0005886">
    <property type="term" value="C:plasma membrane"/>
    <property type="evidence" value="ECO:0000318"/>
    <property type="project" value="GO_Central"/>
</dbReference>
<dbReference type="GO" id="GO:0005096">
    <property type="term" value="F:GTPase activator activity"/>
    <property type="evidence" value="ECO:0007669"/>
    <property type="project" value="Ensembl"/>
</dbReference>
<dbReference type="GO" id="GO:0001515">
    <property type="term" value="F:opioid peptide activity"/>
    <property type="evidence" value="ECO:0007669"/>
    <property type="project" value="Ensembl"/>
</dbReference>
<dbReference type="GO" id="GO:0031267">
    <property type="term" value="F:small GTPase binding"/>
    <property type="evidence" value="ECO:0000318"/>
    <property type="project" value="GO_Central"/>
</dbReference>
<dbReference type="GO" id="GO:0030036">
    <property type="term" value="P:actin cytoskeleton organization"/>
    <property type="evidence" value="ECO:0007669"/>
    <property type="project" value="Ensembl"/>
</dbReference>
<dbReference type="GO" id="GO:0071346">
    <property type="term" value="P:cellular response to type II interferon"/>
    <property type="evidence" value="ECO:0007669"/>
    <property type="project" value="Ensembl"/>
</dbReference>
<dbReference type="GO" id="GO:0030838">
    <property type="term" value="P:positive regulation of actin filament polymerization"/>
    <property type="evidence" value="ECO:0000318"/>
    <property type="project" value="GO_Central"/>
</dbReference>
<dbReference type="GO" id="GO:0031274">
    <property type="term" value="P:positive regulation of pseudopodium assembly"/>
    <property type="evidence" value="ECO:0000318"/>
    <property type="project" value="GO_Central"/>
</dbReference>
<dbReference type="GO" id="GO:0008360">
    <property type="term" value="P:regulation of cell shape"/>
    <property type="evidence" value="ECO:0000318"/>
    <property type="project" value="GO_Central"/>
</dbReference>
<dbReference type="GO" id="GO:0007266">
    <property type="term" value="P:Rho protein signal transduction"/>
    <property type="evidence" value="ECO:0000318"/>
    <property type="project" value="GO_Central"/>
</dbReference>
<dbReference type="InterPro" id="IPR029273">
    <property type="entry name" value="Cdc42_effect-like"/>
</dbReference>
<dbReference type="InterPro" id="IPR051296">
    <property type="entry name" value="Cdc42_Effector_BORG/CEP"/>
</dbReference>
<dbReference type="InterPro" id="IPR017363">
    <property type="entry name" value="Cdc42_effector_prot_2"/>
</dbReference>
<dbReference type="InterPro" id="IPR000095">
    <property type="entry name" value="CRIB_dom"/>
</dbReference>
<dbReference type="PANTHER" id="PTHR15344:SF4">
    <property type="entry name" value="CDC42 EFFECTOR PROTEIN 2"/>
    <property type="match status" value="1"/>
</dbReference>
<dbReference type="PANTHER" id="PTHR15344">
    <property type="entry name" value="CDC42 EFFECTOR PROTEIN BORG"/>
    <property type="match status" value="1"/>
</dbReference>
<dbReference type="Pfam" id="PF14957">
    <property type="entry name" value="BORG_CEP"/>
    <property type="match status" value="2"/>
</dbReference>
<dbReference type="Pfam" id="PF00786">
    <property type="entry name" value="PBD"/>
    <property type="match status" value="1"/>
</dbReference>
<dbReference type="PIRSF" id="PIRSF038036">
    <property type="entry name" value="Cdc42_effector_p2"/>
    <property type="match status" value="1"/>
</dbReference>
<dbReference type="SMART" id="SM00285">
    <property type="entry name" value="PBD"/>
    <property type="match status" value="1"/>
</dbReference>
<dbReference type="PROSITE" id="PS50108">
    <property type="entry name" value="CRIB"/>
    <property type="match status" value="1"/>
</dbReference>